<evidence type="ECO:0000250" key="1"/>
<evidence type="ECO:0000250" key="2">
    <source>
        <dbReference type="UniProtKB" id="P53215"/>
    </source>
</evidence>
<evidence type="ECO:0000305" key="3"/>
<dbReference type="EC" id="2.7.7.79" evidence="2"/>
<dbReference type="EMBL" id="CU329672">
    <property type="protein sequence ID" value="CAB40011.1"/>
    <property type="molecule type" value="Genomic_DNA"/>
</dbReference>
<dbReference type="PIR" id="T41508">
    <property type="entry name" value="T41508"/>
</dbReference>
<dbReference type="RefSeq" id="NP_587981.1">
    <property type="nucleotide sequence ID" value="NM_001022972.2"/>
</dbReference>
<dbReference type="SMR" id="Q9Y7T3"/>
<dbReference type="FunCoup" id="Q9Y7T3">
    <property type="interactions" value="379"/>
</dbReference>
<dbReference type="STRING" id="284812.Q9Y7T3"/>
<dbReference type="PaxDb" id="4896-SPCC63.07.1"/>
<dbReference type="EnsemblFungi" id="SPCC63.07.1">
    <property type="protein sequence ID" value="SPCC63.07.1:pep"/>
    <property type="gene ID" value="SPCC63.07"/>
</dbReference>
<dbReference type="GeneID" id="2539571"/>
<dbReference type="KEGG" id="spo:2539571"/>
<dbReference type="PomBase" id="SPCC63.07">
    <property type="gene designation" value="thg1"/>
</dbReference>
<dbReference type="VEuPathDB" id="FungiDB:SPCC63.07"/>
<dbReference type="eggNOG" id="KOG2721">
    <property type="taxonomic scope" value="Eukaryota"/>
</dbReference>
<dbReference type="HOGENOM" id="CLU_044271_0_1_1"/>
<dbReference type="InParanoid" id="Q9Y7T3"/>
<dbReference type="OMA" id="WKQHTEI"/>
<dbReference type="PhylomeDB" id="Q9Y7T3"/>
<dbReference type="PRO" id="PR:Q9Y7T3"/>
<dbReference type="Proteomes" id="UP000002485">
    <property type="component" value="Chromosome III"/>
</dbReference>
<dbReference type="GO" id="GO:0005829">
    <property type="term" value="C:cytosol"/>
    <property type="evidence" value="ECO:0007005"/>
    <property type="project" value="PomBase"/>
</dbReference>
<dbReference type="GO" id="GO:0005634">
    <property type="term" value="C:nucleus"/>
    <property type="evidence" value="ECO:0007005"/>
    <property type="project" value="PomBase"/>
</dbReference>
<dbReference type="GO" id="GO:0005525">
    <property type="term" value="F:GTP binding"/>
    <property type="evidence" value="ECO:0007669"/>
    <property type="project" value="UniProtKB-KW"/>
</dbReference>
<dbReference type="GO" id="GO:0000287">
    <property type="term" value="F:magnesium ion binding"/>
    <property type="evidence" value="ECO:0007669"/>
    <property type="project" value="InterPro"/>
</dbReference>
<dbReference type="GO" id="GO:0008193">
    <property type="term" value="F:tRNA guanylyltransferase activity"/>
    <property type="evidence" value="ECO:0000250"/>
    <property type="project" value="UniProtKB"/>
</dbReference>
<dbReference type="GO" id="GO:0006400">
    <property type="term" value="P:tRNA modification"/>
    <property type="evidence" value="ECO:0000250"/>
    <property type="project" value="UniProtKB"/>
</dbReference>
<dbReference type="GO" id="GO:0008033">
    <property type="term" value="P:tRNA processing"/>
    <property type="evidence" value="ECO:0000250"/>
    <property type="project" value="UniProtKB"/>
</dbReference>
<dbReference type="FunFam" id="3.30.70.3000:FF:000003">
    <property type="entry name" value="tRNA(His) guanylyltransferase"/>
    <property type="match status" value="1"/>
</dbReference>
<dbReference type="Gene3D" id="3.30.70.3000">
    <property type="match status" value="1"/>
</dbReference>
<dbReference type="InterPro" id="IPR025845">
    <property type="entry name" value="Thg1_C_dom"/>
</dbReference>
<dbReference type="InterPro" id="IPR024956">
    <property type="entry name" value="tRNAHis_GuaTrfase_cat"/>
</dbReference>
<dbReference type="InterPro" id="IPR007537">
    <property type="entry name" value="tRNAHis_GuaTrfase_Thg1"/>
</dbReference>
<dbReference type="InterPro" id="IPR038469">
    <property type="entry name" value="tRNAHis_GuaTrfase_Thg1_sf"/>
</dbReference>
<dbReference type="PANTHER" id="PTHR12729">
    <property type="entry name" value="TRNA(HIS) GUANYLYLTRANSFERASE-RELATED"/>
    <property type="match status" value="1"/>
</dbReference>
<dbReference type="PANTHER" id="PTHR12729:SF6">
    <property type="entry name" value="TRNA(HIS) GUANYLYLTRANSFERASE-RELATED"/>
    <property type="match status" value="1"/>
</dbReference>
<dbReference type="Pfam" id="PF04446">
    <property type="entry name" value="Thg1"/>
    <property type="match status" value="1"/>
</dbReference>
<dbReference type="Pfam" id="PF14413">
    <property type="entry name" value="Thg1C"/>
    <property type="match status" value="1"/>
</dbReference>
<dbReference type="PIRSF" id="PIRSF028980">
    <property type="entry name" value="tRNAHis_guanylyltransferase"/>
    <property type="match status" value="1"/>
</dbReference>
<keyword id="KW-0342">GTP-binding</keyword>
<keyword id="KW-0460">Magnesium</keyword>
<keyword id="KW-0479">Metal-binding</keyword>
<keyword id="KW-0547">Nucleotide-binding</keyword>
<keyword id="KW-0548">Nucleotidyltransferase</keyword>
<keyword id="KW-1185">Reference proteome</keyword>
<keyword id="KW-0808">Transferase</keyword>
<keyword id="KW-0819">tRNA processing</keyword>
<reference key="1">
    <citation type="journal article" date="2002" name="Nature">
        <title>The genome sequence of Schizosaccharomyces pombe.</title>
        <authorList>
            <person name="Wood V."/>
            <person name="Gwilliam R."/>
            <person name="Rajandream M.A."/>
            <person name="Lyne M.H."/>
            <person name="Lyne R."/>
            <person name="Stewart A."/>
            <person name="Sgouros J.G."/>
            <person name="Peat N."/>
            <person name="Hayles J."/>
            <person name="Baker S.G."/>
            <person name="Basham D."/>
            <person name="Bowman S."/>
            <person name="Brooks K."/>
            <person name="Brown D."/>
            <person name="Brown S."/>
            <person name="Chillingworth T."/>
            <person name="Churcher C.M."/>
            <person name="Collins M."/>
            <person name="Connor R."/>
            <person name="Cronin A."/>
            <person name="Davis P."/>
            <person name="Feltwell T."/>
            <person name="Fraser A."/>
            <person name="Gentles S."/>
            <person name="Goble A."/>
            <person name="Hamlin N."/>
            <person name="Harris D.E."/>
            <person name="Hidalgo J."/>
            <person name="Hodgson G."/>
            <person name="Holroyd S."/>
            <person name="Hornsby T."/>
            <person name="Howarth S."/>
            <person name="Huckle E.J."/>
            <person name="Hunt S."/>
            <person name="Jagels K."/>
            <person name="James K.D."/>
            <person name="Jones L."/>
            <person name="Jones M."/>
            <person name="Leather S."/>
            <person name="McDonald S."/>
            <person name="McLean J."/>
            <person name="Mooney P."/>
            <person name="Moule S."/>
            <person name="Mungall K.L."/>
            <person name="Murphy L.D."/>
            <person name="Niblett D."/>
            <person name="Odell C."/>
            <person name="Oliver K."/>
            <person name="O'Neil S."/>
            <person name="Pearson D."/>
            <person name="Quail M.A."/>
            <person name="Rabbinowitsch E."/>
            <person name="Rutherford K.M."/>
            <person name="Rutter S."/>
            <person name="Saunders D."/>
            <person name="Seeger K."/>
            <person name="Sharp S."/>
            <person name="Skelton J."/>
            <person name="Simmonds M.N."/>
            <person name="Squares R."/>
            <person name="Squares S."/>
            <person name="Stevens K."/>
            <person name="Taylor K."/>
            <person name="Taylor R.G."/>
            <person name="Tivey A."/>
            <person name="Walsh S.V."/>
            <person name="Warren T."/>
            <person name="Whitehead S."/>
            <person name="Woodward J.R."/>
            <person name="Volckaert G."/>
            <person name="Aert R."/>
            <person name="Robben J."/>
            <person name="Grymonprez B."/>
            <person name="Weltjens I."/>
            <person name="Vanstreels E."/>
            <person name="Rieger M."/>
            <person name="Schaefer M."/>
            <person name="Mueller-Auer S."/>
            <person name="Gabel C."/>
            <person name="Fuchs M."/>
            <person name="Duesterhoeft A."/>
            <person name="Fritzc C."/>
            <person name="Holzer E."/>
            <person name="Moestl D."/>
            <person name="Hilbert H."/>
            <person name="Borzym K."/>
            <person name="Langer I."/>
            <person name="Beck A."/>
            <person name="Lehrach H."/>
            <person name="Reinhardt R."/>
            <person name="Pohl T.M."/>
            <person name="Eger P."/>
            <person name="Zimmermann W."/>
            <person name="Wedler H."/>
            <person name="Wambutt R."/>
            <person name="Purnelle B."/>
            <person name="Goffeau A."/>
            <person name="Cadieu E."/>
            <person name="Dreano S."/>
            <person name="Gloux S."/>
            <person name="Lelaure V."/>
            <person name="Mottier S."/>
            <person name="Galibert F."/>
            <person name="Aves S.J."/>
            <person name="Xiang Z."/>
            <person name="Hunt C."/>
            <person name="Moore K."/>
            <person name="Hurst S.M."/>
            <person name="Lucas M."/>
            <person name="Rochet M."/>
            <person name="Gaillardin C."/>
            <person name="Tallada V.A."/>
            <person name="Garzon A."/>
            <person name="Thode G."/>
            <person name="Daga R.R."/>
            <person name="Cruzado L."/>
            <person name="Jimenez J."/>
            <person name="Sanchez M."/>
            <person name="del Rey F."/>
            <person name="Benito J."/>
            <person name="Dominguez A."/>
            <person name="Revuelta J.L."/>
            <person name="Moreno S."/>
            <person name="Armstrong J."/>
            <person name="Forsburg S.L."/>
            <person name="Cerutti L."/>
            <person name="Lowe T."/>
            <person name="McCombie W.R."/>
            <person name="Paulsen I."/>
            <person name="Potashkin J."/>
            <person name="Shpakovski G.V."/>
            <person name="Ussery D."/>
            <person name="Barrell B.G."/>
            <person name="Nurse P."/>
        </authorList>
    </citation>
    <scope>NUCLEOTIDE SEQUENCE [LARGE SCALE GENOMIC DNA]</scope>
    <source>
        <strain>972 / ATCC 24843</strain>
    </source>
</reference>
<gene>
    <name type="primary">thg1</name>
    <name type="ORF">SPCC63.07</name>
</gene>
<accession>Q9Y7T3</accession>
<sequence length="261" mass="31063">MAKSRFEYVKQYERLDRLLPETYIVIRIDGKGFHKFTKKHDFEKPNDLRCLNLMNAAARVVMSEFTDIVLAYGDSDEYSFVWSKSTELYERRESKLVSHVCSLFTSAFVFNWPKHFDIPLLSLPSFDGRAVLYPNMKVLRDYLHWRQVDCHINNLYNTTFWMLILKGGFTNTQAEEYLKGTVSAEKHEILFSKFGINYNFEPEIYKKGSIWIREPIDQEWHQQDKKFSVKQKKKMVLSILHVSLIDDDFWTSRPFLEVLLQ</sequence>
<comment type="function">
    <text evidence="2">Adds a GMP to the 5'-end of tRNA(His) after transcription and RNase P cleavage.</text>
</comment>
<comment type="catalytic activity">
    <reaction evidence="2">
        <text>a 5'-end ribonucleotide-tRNA(His) + GTP + ATP + H2O = a 5'-end phospho-guanosine-ribonucleotide-tRNA(His) + AMP + 2 diphosphate + H(+)</text>
        <dbReference type="Rhea" id="RHEA:54564"/>
        <dbReference type="Rhea" id="RHEA-COMP:14193"/>
        <dbReference type="Rhea" id="RHEA-COMP:14917"/>
        <dbReference type="ChEBI" id="CHEBI:15377"/>
        <dbReference type="ChEBI" id="CHEBI:15378"/>
        <dbReference type="ChEBI" id="CHEBI:30616"/>
        <dbReference type="ChEBI" id="CHEBI:33019"/>
        <dbReference type="ChEBI" id="CHEBI:37565"/>
        <dbReference type="ChEBI" id="CHEBI:138282"/>
        <dbReference type="ChEBI" id="CHEBI:141847"/>
        <dbReference type="ChEBI" id="CHEBI:456215"/>
        <dbReference type="EC" id="2.7.7.79"/>
    </reaction>
</comment>
<comment type="cofactor">
    <cofactor evidence="1">
        <name>Mg(2+)</name>
        <dbReference type="ChEBI" id="CHEBI:18420"/>
    </cofactor>
    <text evidence="1">Binds 2 magnesium ions per subunit.</text>
</comment>
<comment type="similarity">
    <text evidence="3">Belongs to the tRNA(His) guanylyltransferase family.</text>
</comment>
<organism>
    <name type="scientific">Schizosaccharomyces pombe (strain 972 / ATCC 24843)</name>
    <name type="common">Fission yeast</name>
    <dbReference type="NCBI Taxonomy" id="284812"/>
    <lineage>
        <taxon>Eukaryota</taxon>
        <taxon>Fungi</taxon>
        <taxon>Dikarya</taxon>
        <taxon>Ascomycota</taxon>
        <taxon>Taphrinomycotina</taxon>
        <taxon>Schizosaccharomycetes</taxon>
        <taxon>Schizosaccharomycetales</taxon>
        <taxon>Schizosaccharomycetaceae</taxon>
        <taxon>Schizosaccharomyces</taxon>
    </lineage>
</organism>
<feature type="chain" id="PRO_0000284993" description="tRNA(His) guanylyltransferase">
    <location>
        <begin position="1"/>
        <end position="261"/>
    </location>
</feature>
<feature type="binding site" evidence="1">
    <location>
        <begin position="29"/>
        <end position="34"/>
    </location>
    <ligand>
        <name>GTP</name>
        <dbReference type="ChEBI" id="CHEBI:37565"/>
    </ligand>
</feature>
<feature type="binding site" evidence="1">
    <location>
        <position position="29"/>
    </location>
    <ligand>
        <name>Mg(2+)</name>
        <dbReference type="ChEBI" id="CHEBI:18420"/>
        <label>1</label>
        <note>catalytic</note>
    </ligand>
</feature>
<feature type="binding site" evidence="1">
    <location>
        <position position="29"/>
    </location>
    <ligand>
        <name>Mg(2+)</name>
        <dbReference type="ChEBI" id="CHEBI:18420"/>
        <label>2</label>
        <note>catalytic</note>
    </ligand>
</feature>
<feature type="binding site" evidence="1">
    <location>
        <position position="30"/>
    </location>
    <ligand>
        <name>Mg(2+)</name>
        <dbReference type="ChEBI" id="CHEBI:18420"/>
        <label>1</label>
        <note>catalytic</note>
    </ligand>
</feature>
<feature type="binding site" evidence="1">
    <location>
        <begin position="75"/>
        <end position="76"/>
    </location>
    <ligand>
        <name>GTP</name>
        <dbReference type="ChEBI" id="CHEBI:37565"/>
    </ligand>
</feature>
<feature type="binding site" evidence="1">
    <location>
        <position position="76"/>
    </location>
    <ligand>
        <name>Mg(2+)</name>
        <dbReference type="ChEBI" id="CHEBI:18420"/>
        <label>1</label>
        <note>catalytic</note>
    </ligand>
</feature>
<feature type="binding site" evidence="1">
    <location>
        <position position="76"/>
    </location>
    <ligand>
        <name>Mg(2+)</name>
        <dbReference type="ChEBI" id="CHEBI:18420"/>
        <label>2</label>
        <note>catalytic</note>
    </ligand>
</feature>
<proteinExistence type="inferred from homology"/>
<protein>
    <recommendedName>
        <fullName>tRNA(His) guanylyltransferase</fullName>
        <ecNumber evidence="2">2.7.7.79</ecNumber>
    </recommendedName>
    <alternativeName>
        <fullName>tRNA-histidine guanylyltransferase</fullName>
    </alternativeName>
</protein>
<name>THG1_SCHPO</name>